<feature type="chain" id="PRO_1000009161" description="Hydroxylamine reductase">
    <location>
        <begin position="1"/>
        <end position="550"/>
    </location>
</feature>
<feature type="binding site" evidence="1">
    <location>
        <position position="3"/>
    </location>
    <ligand>
        <name>[2Fe-2S] cluster</name>
        <dbReference type="ChEBI" id="CHEBI:190135"/>
    </ligand>
</feature>
<feature type="binding site" evidence="1">
    <location>
        <position position="6"/>
    </location>
    <ligand>
        <name>[2Fe-2S] cluster</name>
        <dbReference type="ChEBI" id="CHEBI:190135"/>
    </ligand>
</feature>
<feature type="binding site" evidence="1">
    <location>
        <position position="18"/>
    </location>
    <ligand>
        <name>[2Fe-2S] cluster</name>
        <dbReference type="ChEBI" id="CHEBI:190135"/>
    </ligand>
</feature>
<feature type="binding site" evidence="1">
    <location>
        <position position="25"/>
    </location>
    <ligand>
        <name>[2Fe-2S] cluster</name>
        <dbReference type="ChEBI" id="CHEBI:190135"/>
    </ligand>
</feature>
<feature type="binding site" evidence="1">
    <location>
        <position position="249"/>
    </location>
    <ligand>
        <name>hybrid [4Fe-2O-2S] cluster</name>
        <dbReference type="ChEBI" id="CHEBI:60519"/>
    </ligand>
</feature>
<feature type="binding site" evidence="1">
    <location>
        <position position="273"/>
    </location>
    <ligand>
        <name>hybrid [4Fe-2O-2S] cluster</name>
        <dbReference type="ChEBI" id="CHEBI:60519"/>
    </ligand>
</feature>
<feature type="binding site" evidence="1">
    <location>
        <position position="317"/>
    </location>
    <ligand>
        <name>hybrid [4Fe-2O-2S] cluster</name>
        <dbReference type="ChEBI" id="CHEBI:60519"/>
    </ligand>
</feature>
<feature type="binding site" description="via persulfide group" evidence="1">
    <location>
        <position position="405"/>
    </location>
    <ligand>
        <name>hybrid [4Fe-2O-2S] cluster</name>
        <dbReference type="ChEBI" id="CHEBI:60519"/>
    </ligand>
</feature>
<feature type="binding site" evidence="1">
    <location>
        <position position="433"/>
    </location>
    <ligand>
        <name>hybrid [4Fe-2O-2S] cluster</name>
        <dbReference type="ChEBI" id="CHEBI:60519"/>
    </ligand>
</feature>
<feature type="binding site" evidence="1">
    <location>
        <position position="458"/>
    </location>
    <ligand>
        <name>hybrid [4Fe-2O-2S] cluster</name>
        <dbReference type="ChEBI" id="CHEBI:60519"/>
    </ligand>
</feature>
<feature type="binding site" evidence="1">
    <location>
        <position position="492"/>
    </location>
    <ligand>
        <name>hybrid [4Fe-2O-2S] cluster</name>
        <dbReference type="ChEBI" id="CHEBI:60519"/>
    </ligand>
</feature>
<feature type="binding site" evidence="1">
    <location>
        <position position="494"/>
    </location>
    <ligand>
        <name>hybrid [4Fe-2O-2S] cluster</name>
        <dbReference type="ChEBI" id="CHEBI:60519"/>
    </ligand>
</feature>
<feature type="modified residue" description="Cysteine persulfide" evidence="1">
    <location>
        <position position="405"/>
    </location>
</feature>
<accession>Q5PGK4</accession>
<gene>
    <name evidence="1" type="primary">hcp</name>
    <name type="ordered locus">SPA1862</name>
</gene>
<sequence>MFCVQCEQTIRTPAGNGCSYAQGMCGKTAETSDLQDLLIAALQGLSAWAVKAREYGIINHDVDNFAPRAFFSTLTNVNFDSPRIVGYAREAIAMREALKAQCLSVDANAHCDNPMADLQLVSDDLGELQRQAAEFTPNKDKAAIGENILGLRLLCLYGLKGAAAYMEHAHVLGQYDNDIYAQYHKIMAWLGTWPADMNALLECAMEIGQMNFKVMSILDAGETTKYGHPTPTQVNVKATEGKCILISGHDLKDLYNLLEQTEGTGVNVYTHGEMLPAHGYPELRKFKHLVGNYGSGWQNQQVEFARFPGPIVMTSNCIIDPTVGSYDDRIWTRSIVGWPGVSHLEGDDFGPVIAQAQQMAGFPYSEIPHLITVGFGRQTLLGAADTLIDLVSREKLRHIFLVGGCDGARGERNYFTDFATSVPDDCLILTLACGKYRFNKLEFGDIEGLPRLVDAGQCNDAYSAIILAVTLAEKLGCGVNDLPLSLVLSWFEQKAIVILLTLLSLGVKNIVTGPTAPGFFTPDLLAILNEKFGLRSVTTVEEDMKQLLSA</sequence>
<organism>
    <name type="scientific">Salmonella paratyphi A (strain ATCC 9150 / SARB42)</name>
    <dbReference type="NCBI Taxonomy" id="295319"/>
    <lineage>
        <taxon>Bacteria</taxon>
        <taxon>Pseudomonadati</taxon>
        <taxon>Pseudomonadota</taxon>
        <taxon>Gammaproteobacteria</taxon>
        <taxon>Enterobacterales</taxon>
        <taxon>Enterobacteriaceae</taxon>
        <taxon>Salmonella</taxon>
    </lineage>
</organism>
<dbReference type="EC" id="1.7.99.1" evidence="1"/>
<dbReference type="EMBL" id="CP000026">
    <property type="protein sequence ID" value="AAV77773.1"/>
    <property type="molecule type" value="Genomic_DNA"/>
</dbReference>
<dbReference type="RefSeq" id="WP_000458794.1">
    <property type="nucleotide sequence ID" value="NC_006511.1"/>
</dbReference>
<dbReference type="SMR" id="Q5PGK4"/>
<dbReference type="KEGG" id="spt:SPA1862"/>
<dbReference type="HOGENOM" id="CLU_038344_2_0_6"/>
<dbReference type="Proteomes" id="UP000008185">
    <property type="component" value="Chromosome"/>
</dbReference>
<dbReference type="GO" id="GO:0005737">
    <property type="term" value="C:cytoplasm"/>
    <property type="evidence" value="ECO:0007669"/>
    <property type="project" value="UniProtKB-SubCell"/>
</dbReference>
<dbReference type="GO" id="GO:0051537">
    <property type="term" value="F:2 iron, 2 sulfur cluster binding"/>
    <property type="evidence" value="ECO:0007669"/>
    <property type="project" value="UniProtKB-KW"/>
</dbReference>
<dbReference type="GO" id="GO:0050418">
    <property type="term" value="F:hydroxylamine reductase activity"/>
    <property type="evidence" value="ECO:0007669"/>
    <property type="project" value="UniProtKB-UniRule"/>
</dbReference>
<dbReference type="GO" id="GO:0046872">
    <property type="term" value="F:metal ion binding"/>
    <property type="evidence" value="ECO:0007669"/>
    <property type="project" value="UniProtKB-KW"/>
</dbReference>
<dbReference type="GO" id="GO:0004601">
    <property type="term" value="F:peroxidase activity"/>
    <property type="evidence" value="ECO:0007669"/>
    <property type="project" value="TreeGrafter"/>
</dbReference>
<dbReference type="GO" id="GO:0042542">
    <property type="term" value="P:response to hydrogen peroxide"/>
    <property type="evidence" value="ECO:0007669"/>
    <property type="project" value="TreeGrafter"/>
</dbReference>
<dbReference type="CDD" id="cd01914">
    <property type="entry name" value="HCP"/>
    <property type="match status" value="1"/>
</dbReference>
<dbReference type="FunFam" id="1.20.1270.20:FF:000001">
    <property type="entry name" value="Hydroxylamine reductase"/>
    <property type="match status" value="1"/>
</dbReference>
<dbReference type="FunFam" id="1.20.1270.20:FF:000002">
    <property type="entry name" value="Hydroxylamine reductase"/>
    <property type="match status" value="1"/>
</dbReference>
<dbReference type="FunFam" id="3.40.50.2030:FF:000001">
    <property type="entry name" value="Hydroxylamine reductase"/>
    <property type="match status" value="1"/>
</dbReference>
<dbReference type="FunFam" id="3.40.50.2030:FF:000002">
    <property type="entry name" value="Hydroxylamine reductase"/>
    <property type="match status" value="1"/>
</dbReference>
<dbReference type="Gene3D" id="1.20.1270.20">
    <property type="match status" value="2"/>
</dbReference>
<dbReference type="Gene3D" id="3.40.50.2030">
    <property type="match status" value="2"/>
</dbReference>
<dbReference type="HAMAP" id="MF_00069">
    <property type="entry name" value="Hydroxylam_reduct"/>
    <property type="match status" value="1"/>
</dbReference>
<dbReference type="InterPro" id="IPR004137">
    <property type="entry name" value="HCP/CODH"/>
</dbReference>
<dbReference type="InterPro" id="IPR010048">
    <property type="entry name" value="Hydroxylam_reduct"/>
</dbReference>
<dbReference type="InterPro" id="IPR016099">
    <property type="entry name" value="Prismane-like_a/b-sand"/>
</dbReference>
<dbReference type="InterPro" id="IPR011254">
    <property type="entry name" value="Prismane-like_sf"/>
</dbReference>
<dbReference type="InterPro" id="IPR016100">
    <property type="entry name" value="Prismane_a-bundle"/>
</dbReference>
<dbReference type="NCBIfam" id="TIGR01703">
    <property type="entry name" value="hybrid_clust"/>
    <property type="match status" value="1"/>
</dbReference>
<dbReference type="NCBIfam" id="NF003658">
    <property type="entry name" value="PRK05290.1"/>
    <property type="match status" value="1"/>
</dbReference>
<dbReference type="PANTHER" id="PTHR30109">
    <property type="entry name" value="HYDROXYLAMINE REDUCTASE"/>
    <property type="match status" value="1"/>
</dbReference>
<dbReference type="PANTHER" id="PTHR30109:SF0">
    <property type="entry name" value="HYDROXYLAMINE REDUCTASE"/>
    <property type="match status" value="1"/>
</dbReference>
<dbReference type="Pfam" id="PF03063">
    <property type="entry name" value="Prismane"/>
    <property type="match status" value="1"/>
</dbReference>
<dbReference type="PIRSF" id="PIRSF000076">
    <property type="entry name" value="HCP"/>
    <property type="match status" value="1"/>
</dbReference>
<dbReference type="SUPFAM" id="SSF56821">
    <property type="entry name" value="Prismane protein-like"/>
    <property type="match status" value="1"/>
</dbReference>
<proteinExistence type="inferred from homology"/>
<name>HCP_SALPA</name>
<protein>
    <recommendedName>
        <fullName evidence="1">Hydroxylamine reductase</fullName>
        <ecNumber evidence="1">1.7.99.1</ecNumber>
    </recommendedName>
    <alternativeName>
        <fullName evidence="1">Hybrid-cluster protein</fullName>
        <shortName evidence="1">HCP</shortName>
    </alternativeName>
    <alternativeName>
        <fullName evidence="1">Prismane protein</fullName>
    </alternativeName>
</protein>
<evidence type="ECO:0000255" key="1">
    <source>
        <dbReference type="HAMAP-Rule" id="MF_00069"/>
    </source>
</evidence>
<comment type="function">
    <text evidence="1">Catalyzes the reduction of hydroxylamine to form NH(3) and H(2)O.</text>
</comment>
<comment type="catalytic activity">
    <reaction evidence="1">
        <text>A + NH4(+) + H2O = hydroxylamine + AH2 + H(+)</text>
        <dbReference type="Rhea" id="RHEA:22052"/>
        <dbReference type="ChEBI" id="CHEBI:13193"/>
        <dbReference type="ChEBI" id="CHEBI:15377"/>
        <dbReference type="ChEBI" id="CHEBI:15378"/>
        <dbReference type="ChEBI" id="CHEBI:15429"/>
        <dbReference type="ChEBI" id="CHEBI:17499"/>
        <dbReference type="ChEBI" id="CHEBI:28938"/>
        <dbReference type="EC" id="1.7.99.1"/>
    </reaction>
</comment>
<comment type="cofactor">
    <cofactor evidence="1">
        <name>[2Fe-2S] cluster</name>
        <dbReference type="ChEBI" id="CHEBI:190135"/>
    </cofactor>
    <text evidence="1">Binds 1 [2Fe-2S] cluster.</text>
</comment>
<comment type="cofactor">
    <cofactor evidence="1">
        <name>hybrid [4Fe-2O-2S] cluster</name>
        <dbReference type="ChEBI" id="CHEBI:60519"/>
    </cofactor>
    <text evidence="1">Binds 1 hybrid [4Fe-2O-2S] cluster.</text>
</comment>
<comment type="subcellular location">
    <subcellularLocation>
        <location evidence="1">Cytoplasm</location>
    </subcellularLocation>
</comment>
<comment type="similarity">
    <text evidence="1">Belongs to the HCP family.</text>
</comment>
<reference key="1">
    <citation type="journal article" date="2004" name="Nat. Genet.">
        <title>Comparison of genome degradation in Paratyphi A and Typhi, human-restricted serovars of Salmonella enterica that cause typhoid.</title>
        <authorList>
            <person name="McClelland M."/>
            <person name="Sanderson K.E."/>
            <person name="Clifton S.W."/>
            <person name="Latreille P."/>
            <person name="Porwollik S."/>
            <person name="Sabo A."/>
            <person name="Meyer R."/>
            <person name="Bieri T."/>
            <person name="Ozersky P."/>
            <person name="McLellan M."/>
            <person name="Harkins C.R."/>
            <person name="Wang C."/>
            <person name="Nguyen C."/>
            <person name="Berghoff A."/>
            <person name="Elliott G."/>
            <person name="Kohlberg S."/>
            <person name="Strong C."/>
            <person name="Du F."/>
            <person name="Carter J."/>
            <person name="Kremizki C."/>
            <person name="Layman D."/>
            <person name="Leonard S."/>
            <person name="Sun H."/>
            <person name="Fulton L."/>
            <person name="Nash W."/>
            <person name="Miner T."/>
            <person name="Minx P."/>
            <person name="Delehaunty K."/>
            <person name="Fronick C."/>
            <person name="Magrini V."/>
            <person name="Nhan M."/>
            <person name="Warren W."/>
            <person name="Florea L."/>
            <person name="Spieth J."/>
            <person name="Wilson R.K."/>
        </authorList>
    </citation>
    <scope>NUCLEOTIDE SEQUENCE [LARGE SCALE GENOMIC DNA]</scope>
    <source>
        <strain>ATCC 9150 / SARB42</strain>
    </source>
</reference>
<keyword id="KW-0001">2Fe-2S</keyword>
<keyword id="KW-0963">Cytoplasm</keyword>
<keyword id="KW-0408">Iron</keyword>
<keyword id="KW-0411">Iron-sulfur</keyword>
<keyword id="KW-0479">Metal-binding</keyword>
<keyword id="KW-0560">Oxidoreductase</keyword>